<accession>Q6XSW4</accession>
<comment type="function">
    <text evidence="1">Inhibits post-transcriptional processing of cellular pre-mRNA, by binding and inhibiting two cellular proteins that are required for the 3'-end processing of cellular pre-mRNAs: the 30 kDa cleavage and polyadenylation specificity factor/CPSF4 and the poly(A)-binding protein 2/PABPN1. In turn, unprocessed 3' end pre-mRNAs accumulate in the host nucleus and are no longer exported to the cytoplasm. Cellular protein synthesis is thereby shut off very early after virus infection. Viral protein synthesis is not affected by the inhibition of the cellular 3' end processing machinery because the poly(A) tails of viral mRNAs are produced by the viral polymerase through a stuttering mechanism. Prevents the establishment of the cellular antiviral state by inhibiting TRIM25-mediated RIGI ubiquitination, which normally triggers the antiviral transduction signal that leads to the activation of type I IFN genes by transcription factors IRF3 and IRF7. Also binds poly(A) and U6 snRNA. Inhibits the integrated stress response (ISR) in the infected cell by blocking dsRNA binding by EIF2AK2/PKR and further phosphorylation of EIF2S1/EIF-2ALPHA. Stress granule formation is thus inhibited, which allows protein synthesis and viral replication.</text>
</comment>
<comment type="subunit">
    <text evidence="1">Homodimer. Interacts with host TRIM25 (via coiled coil); this interaction specifically inhibits TRIM25 multimerization and TRIM25-mediated RIGI CARD ubiquitination. Interacts with human EIF2AK2/PKR, CPSF4, IVNS1ABP and PABPN1.</text>
</comment>
<comment type="subcellular location">
    <subcellularLocation>
        <location evidence="1">Host nucleus</location>
    </subcellularLocation>
    <subcellularLocation>
        <location evidence="1">Host cytoplasm</location>
    </subcellularLocation>
    <text evidence="1">In uninfected, transfected cells, NS1 is localized in the nucleus. Only in virus infected cells, the nuclear export signal is unveiled, presumably by a viral protein, and a fraction of NS1 is exported in the cytoplasm.</text>
</comment>
<comment type="alternative products">
    <event type="alternative splicing"/>
    <isoform>
        <id>Q6XSW4-1</id>
        <name>NS1</name>
        <sequence type="displayed"/>
    </isoform>
    <isoform>
        <id>Q6XSW5-1</id>
        <name>NEP</name>
        <name>NS2</name>
        <sequence type="external"/>
    </isoform>
</comment>
<comment type="domain">
    <text evidence="1">The dsRNA-binding region is required for suppression of RNA silencing.</text>
</comment>
<comment type="PTM">
    <text evidence="1">Upon interferon induction, ISGylated via host HERC5; this results in the impairment of NS1 interaction with RNA targets due to its inability to form homodimers and to interact with host EIF2AK2/PKR.</text>
</comment>
<comment type="similarity">
    <text evidence="1">Belongs to the influenza A viruses NS1 family.</text>
</comment>
<organism>
    <name type="scientific">Influenza A virus (strain A/England/878/1969 H3N2)</name>
    <dbReference type="NCBI Taxonomy" id="387147"/>
    <lineage>
        <taxon>Viruses</taxon>
        <taxon>Riboviria</taxon>
        <taxon>Orthornavirae</taxon>
        <taxon>Negarnaviricota</taxon>
        <taxon>Polyploviricotina</taxon>
        <taxon>Insthoviricetes</taxon>
        <taxon>Articulavirales</taxon>
        <taxon>Orthomyxoviridae</taxon>
        <taxon>Alphainfluenzavirus</taxon>
        <taxon>Alphainfluenzavirus influenzae</taxon>
        <taxon>Influenza A virus</taxon>
    </lineage>
</organism>
<proteinExistence type="inferred from homology"/>
<reference key="1">
    <citation type="journal article" date="2004" name="Virology">
        <title>Genetic analysis of human H2N2 and early H3N2 influenza viruses, 1957-1972: evidence for genetic divergence and multiple reassortment events.</title>
        <authorList>
            <person name="Lindstrom S.E."/>
            <person name="Cox N.J."/>
            <person name="Klimov A."/>
        </authorList>
    </citation>
    <scope>NUCLEOTIDE SEQUENCE [GENOMIC RNA]</scope>
</reference>
<keyword id="KW-0025">Alternative splicing</keyword>
<keyword id="KW-1262">Eukaryotic host gene expression shutoff by virus</keyword>
<keyword id="KW-1035">Host cytoplasm</keyword>
<keyword id="KW-1190">Host gene expression shutoff by virus</keyword>
<keyword id="KW-1192">Host mRNA suppression by virus</keyword>
<keyword id="KW-1048">Host nucleus</keyword>
<keyword id="KW-0945">Host-virus interaction</keyword>
<keyword id="KW-1090">Inhibition of host innate immune response by virus</keyword>
<keyword id="KW-1114">Inhibition of host interferon signaling pathway by virus</keyword>
<keyword id="KW-1102">Inhibition of host PKR by virus</keyword>
<keyword id="KW-1103">Inhibition of host pre-mRNA processing by virus</keyword>
<keyword id="KW-1088">Inhibition of host RIG-I by virus</keyword>
<keyword id="KW-1113">Inhibition of host RLR pathway by virus</keyword>
<keyword id="KW-0922">Interferon antiviral system evasion</keyword>
<keyword id="KW-0694">RNA-binding</keyword>
<keyword id="KW-0832">Ubl conjugation</keyword>
<keyword id="KW-0899">Viral immunoevasion</keyword>
<feature type="chain" id="PRO_0000324247" description="Non-structural protein 1">
    <location>
        <begin position="1"/>
        <end position="220"/>
    </location>
</feature>
<feature type="region of interest" description="RNA-binding and homodimerization" evidence="1">
    <location>
        <begin position="1"/>
        <end position="73"/>
    </location>
</feature>
<feature type="region of interest" description="CPSF4-binding" evidence="1">
    <location>
        <begin position="180"/>
        <end position="215"/>
    </location>
</feature>
<feature type="short sequence motif" description="Nuclear localization signal" evidence="1">
    <location>
        <begin position="34"/>
        <end position="38"/>
    </location>
</feature>
<feature type="short sequence motif" description="Nuclear export signal" evidence="1">
    <location>
        <begin position="137"/>
        <end position="146"/>
    </location>
</feature>
<evidence type="ECO:0000255" key="1">
    <source>
        <dbReference type="HAMAP-Rule" id="MF_04066"/>
    </source>
</evidence>
<sequence length="220" mass="24978">MDSNTVSSFQVDCFLWHVRKQVVDQELGDAPFLDRLRRDQKSLRGRGSTLGLNIEAATRVGKQIVERILKEESDEALKMTMASAPASRYLTDMTIEELSRNWFMLMPKQKVEGPLCIRIDQAIMDKNIMLKANFSVIFDRLETLILLRAFTEEGAIVGEISPLPSLPGHTIEDVKNAIGVLIGGLEWNDNTVRVSKNLQRFAWRSSNENGRHPLTPKQKR</sequence>
<dbReference type="EMBL" id="AY210300">
    <property type="protein sequence ID" value="AAO46745.1"/>
    <property type="molecule type" value="Genomic_RNA"/>
</dbReference>
<dbReference type="SMR" id="Q6XSW4"/>
<dbReference type="GO" id="GO:0030430">
    <property type="term" value="C:host cell cytoplasm"/>
    <property type="evidence" value="ECO:0007669"/>
    <property type="project" value="UniProtKB-SubCell"/>
</dbReference>
<dbReference type="GO" id="GO:0042025">
    <property type="term" value="C:host cell nucleus"/>
    <property type="evidence" value="ECO:0007669"/>
    <property type="project" value="UniProtKB-SubCell"/>
</dbReference>
<dbReference type="GO" id="GO:0030291">
    <property type="term" value="F:protein serine/threonine kinase inhibitor activity"/>
    <property type="evidence" value="ECO:0007669"/>
    <property type="project" value="UniProtKB-KW"/>
</dbReference>
<dbReference type="GO" id="GO:0003723">
    <property type="term" value="F:RNA binding"/>
    <property type="evidence" value="ECO:0007669"/>
    <property type="project" value="UniProtKB-KW"/>
</dbReference>
<dbReference type="GO" id="GO:0039540">
    <property type="term" value="P:symbiont-mediated suppression of host cytoplasmic pattern recognition receptor signaling pathway via inhibition of RIG-I activity"/>
    <property type="evidence" value="ECO:0007669"/>
    <property type="project" value="UniProtKB-KW"/>
</dbReference>
<dbReference type="GO" id="GO:0039657">
    <property type="term" value="P:symbiont-mediated suppression of host gene expression"/>
    <property type="evidence" value="ECO:0007669"/>
    <property type="project" value="UniProtKB-KW"/>
</dbReference>
<dbReference type="GO" id="GO:0039524">
    <property type="term" value="P:symbiont-mediated suppression of host mRNA processing"/>
    <property type="evidence" value="ECO:0007669"/>
    <property type="project" value="UniProtKB-KW"/>
</dbReference>
<dbReference type="GO" id="GO:0039580">
    <property type="term" value="P:symbiont-mediated suppression of host PKR/eIFalpha signaling"/>
    <property type="evidence" value="ECO:0007669"/>
    <property type="project" value="UniProtKB-KW"/>
</dbReference>
<dbReference type="GO" id="GO:0039502">
    <property type="term" value="P:symbiont-mediated suppression of host type I interferon-mediated signaling pathway"/>
    <property type="evidence" value="ECO:0007669"/>
    <property type="project" value="UniProtKB-KW"/>
</dbReference>
<dbReference type="FunFam" id="1.10.287.10:FF:000001">
    <property type="entry name" value="Non-structural protein 1"/>
    <property type="match status" value="1"/>
</dbReference>
<dbReference type="FunFam" id="3.30.420.330:FF:000001">
    <property type="entry name" value="Non-structural protein 1"/>
    <property type="match status" value="1"/>
</dbReference>
<dbReference type="Gene3D" id="3.30.420.330">
    <property type="entry name" value="Influenza virus non-structural protein, effector domain"/>
    <property type="match status" value="1"/>
</dbReference>
<dbReference type="Gene3D" id="1.10.287.10">
    <property type="entry name" value="S15/NS1, RNA-binding"/>
    <property type="match status" value="1"/>
</dbReference>
<dbReference type="HAMAP" id="MF_04066">
    <property type="entry name" value="INFV_NS1"/>
    <property type="match status" value="1"/>
</dbReference>
<dbReference type="InterPro" id="IPR004208">
    <property type="entry name" value="NS1"/>
</dbReference>
<dbReference type="InterPro" id="IPR000256">
    <property type="entry name" value="NS1A"/>
</dbReference>
<dbReference type="InterPro" id="IPR038064">
    <property type="entry name" value="NS1A_effect_dom-like_sf"/>
</dbReference>
<dbReference type="InterPro" id="IPR009068">
    <property type="entry name" value="uS15_NS1_RNA-bd_sf"/>
</dbReference>
<dbReference type="Pfam" id="PF00600">
    <property type="entry name" value="Flu_NS1"/>
    <property type="match status" value="1"/>
</dbReference>
<dbReference type="SUPFAM" id="SSF143021">
    <property type="entry name" value="Ns1 effector domain-like"/>
    <property type="match status" value="1"/>
</dbReference>
<dbReference type="SUPFAM" id="SSF47060">
    <property type="entry name" value="S15/NS1 RNA-binding domain"/>
    <property type="match status" value="1"/>
</dbReference>
<name>NS1_I69A0</name>
<organismHost>
    <name type="scientific">Aves</name>
    <dbReference type="NCBI Taxonomy" id="8782"/>
</organismHost>
<organismHost>
    <name type="scientific">Homo sapiens</name>
    <name type="common">Human</name>
    <dbReference type="NCBI Taxonomy" id="9606"/>
</organismHost>
<organismHost>
    <name type="scientific">Mysticeti</name>
    <name type="common">baleen whales</name>
    <dbReference type="NCBI Taxonomy" id="9761"/>
</organismHost>
<organismHost>
    <name type="scientific">Phocidae</name>
    <name type="common">true seals</name>
    <dbReference type="NCBI Taxonomy" id="9709"/>
</organismHost>
<organismHost>
    <name type="scientific">Sus scrofa</name>
    <name type="common">Pig</name>
    <dbReference type="NCBI Taxonomy" id="9823"/>
</organismHost>
<protein>
    <recommendedName>
        <fullName evidence="1">Non-structural protein 1</fullName>
        <shortName evidence="1">NS1</shortName>
    </recommendedName>
    <alternativeName>
        <fullName evidence="1">NS1A</fullName>
    </alternativeName>
</protein>
<gene>
    <name evidence="1" type="primary">NS</name>
</gene>